<organism>
    <name type="scientific">Oenothera glazioviana</name>
    <name type="common">Large-flowered evening primrose</name>
    <name type="synonym">Oenothera erythrosepala</name>
    <dbReference type="NCBI Taxonomy" id="482428"/>
    <lineage>
        <taxon>Eukaryota</taxon>
        <taxon>Viridiplantae</taxon>
        <taxon>Streptophyta</taxon>
        <taxon>Embryophyta</taxon>
        <taxon>Tracheophyta</taxon>
        <taxon>Spermatophyta</taxon>
        <taxon>Magnoliopsida</taxon>
        <taxon>eudicotyledons</taxon>
        <taxon>Gunneridae</taxon>
        <taxon>Pentapetalae</taxon>
        <taxon>rosids</taxon>
        <taxon>malvids</taxon>
        <taxon>Myrtales</taxon>
        <taxon>Onagraceae</taxon>
        <taxon>Onagroideae</taxon>
        <taxon>Onagreae</taxon>
        <taxon>Oenothera</taxon>
    </lineage>
</organism>
<comment type="function">
    <text evidence="2">Component of the cytochrome b6-f complex, which mediates electron transfer between photosystem II (PSII) and photosystem I (PSI), cyclic electron flow around PSI, and state transitions.</text>
</comment>
<comment type="cofactor">
    <cofactor evidence="2">
        <name>heme</name>
        <dbReference type="ChEBI" id="CHEBI:30413"/>
    </cofactor>
    <text evidence="2">Binds 1 heme group covalently.</text>
</comment>
<comment type="subunit">
    <text evidence="1">The 4 large subunits of the cytochrome b6-f complex are cytochrome b6, subunit IV (17 kDa polypeptide, petD), cytochrome f and the Rieske protein, while the 4 small subunits are PetG, PetL, PetM and PetN. The complex functions as a dimer (By similarity).</text>
</comment>
<comment type="subcellular location">
    <subcellularLocation>
        <location evidence="2">Plastid</location>
        <location evidence="2">Chloroplast thylakoid membrane</location>
        <topology evidence="2">Single-pass membrane protein</topology>
    </subcellularLocation>
</comment>
<comment type="similarity">
    <text evidence="2">Belongs to the cytochrome f family.</text>
</comment>
<evidence type="ECO:0000250" key="1"/>
<evidence type="ECO:0000255" key="2">
    <source>
        <dbReference type="HAMAP-Rule" id="MF_00610"/>
    </source>
</evidence>
<proteinExistence type="inferred from homology"/>
<reference key="1">
    <citation type="journal article" date="2008" name="Nucleic Acids Res.">
        <title>The complete nucleotide sequences of the five genetically distinct plastid genomes of Oenothera, subsection Oenothera: I. Sequence evaluation and plastome evolution.</title>
        <authorList>
            <person name="Greiner S."/>
            <person name="Wang X."/>
            <person name="Rauwolf U."/>
            <person name="Silber M.V."/>
            <person name="Mayer K."/>
            <person name="Meurer J."/>
            <person name="Haberer G."/>
            <person name="Herrmann R.G."/>
        </authorList>
    </citation>
    <scope>NUCLEOTIDE SEQUENCE [LARGE SCALE GENOMIC DNA]</scope>
    <source>
        <strain>cv. Rr-lamarckiana Sweden</strain>
    </source>
</reference>
<feature type="signal peptide" evidence="2">
    <location>
        <begin position="1"/>
        <end position="33"/>
    </location>
</feature>
<feature type="chain" id="PRO_0000342077" description="Cytochrome f">
    <location>
        <begin position="34"/>
        <end position="318"/>
    </location>
</feature>
<feature type="transmembrane region" description="Helical" evidence="2">
    <location>
        <begin position="284"/>
        <end position="304"/>
    </location>
</feature>
<feature type="binding site" description="axial binding residue" evidence="2">
    <location>
        <position position="34"/>
    </location>
    <ligand>
        <name>heme</name>
        <dbReference type="ChEBI" id="CHEBI:30413"/>
    </ligand>
    <ligandPart>
        <name>Fe</name>
        <dbReference type="ChEBI" id="CHEBI:18248"/>
    </ligandPart>
</feature>
<feature type="binding site" description="covalent" evidence="2">
    <location>
        <position position="54"/>
    </location>
    <ligand>
        <name>heme</name>
        <dbReference type="ChEBI" id="CHEBI:30413"/>
    </ligand>
</feature>
<feature type="binding site" description="covalent" evidence="2">
    <location>
        <position position="57"/>
    </location>
    <ligand>
        <name>heme</name>
        <dbReference type="ChEBI" id="CHEBI:30413"/>
    </ligand>
</feature>
<feature type="binding site" description="axial binding residue" evidence="2">
    <location>
        <position position="58"/>
    </location>
    <ligand>
        <name>heme</name>
        <dbReference type="ChEBI" id="CHEBI:30413"/>
    </ligand>
    <ligandPart>
        <name>Fe</name>
        <dbReference type="ChEBI" id="CHEBI:18248"/>
    </ligandPart>
</feature>
<gene>
    <name evidence="2" type="primary">petA</name>
</gene>
<name>CYF_OENGL</name>
<protein>
    <recommendedName>
        <fullName evidence="2">Cytochrome f</fullName>
    </recommendedName>
</protein>
<geneLocation type="chloroplast"/>
<accession>B0Z557</accession>
<sequence length="318" mass="34928">MKNTFSWIKKEITRSISLSLMIYIITRTSISNAYPIFAQQGYENPREATGRIVCANCHLANKPVDIEVPQAVLPDTVFEAVVRIPYDRQVKQVLANGKKGGLNVGAVLILPEGFELAPPARISPEMKERIGNPSFQSYRPTKKNILVIGPVPGQKYSEITFPILSPDPATNKDVHFLKYPIYVGGNRGRGQIYPDGSKSNNTVYNATAAGIVSKIIRKEKGGYEITITDASDGRQVVDIIPSGPELLVSEGESIKLDQPLTSNPNVGGFGQGDAEVVLQDPLRVQGLLFFLASVILAQIFLVLKKKQFEKVQLSEMNF</sequence>
<dbReference type="EMBL" id="EU262890">
    <property type="protein sequence ID" value="ABX10050.1"/>
    <property type="molecule type" value="Genomic_DNA"/>
</dbReference>
<dbReference type="RefSeq" id="YP_001687296.1">
    <property type="nucleotide sequence ID" value="NC_010360.2"/>
</dbReference>
<dbReference type="SMR" id="B0Z557"/>
<dbReference type="GeneID" id="5955335"/>
<dbReference type="GO" id="GO:0009535">
    <property type="term" value="C:chloroplast thylakoid membrane"/>
    <property type="evidence" value="ECO:0007669"/>
    <property type="project" value="UniProtKB-SubCell"/>
</dbReference>
<dbReference type="GO" id="GO:0009055">
    <property type="term" value="F:electron transfer activity"/>
    <property type="evidence" value="ECO:0007669"/>
    <property type="project" value="UniProtKB-UniRule"/>
</dbReference>
<dbReference type="GO" id="GO:0020037">
    <property type="term" value="F:heme binding"/>
    <property type="evidence" value="ECO:0007669"/>
    <property type="project" value="InterPro"/>
</dbReference>
<dbReference type="GO" id="GO:0005506">
    <property type="term" value="F:iron ion binding"/>
    <property type="evidence" value="ECO:0007669"/>
    <property type="project" value="InterPro"/>
</dbReference>
<dbReference type="GO" id="GO:0015979">
    <property type="term" value="P:photosynthesis"/>
    <property type="evidence" value="ECO:0007669"/>
    <property type="project" value="UniProtKB-UniRule"/>
</dbReference>
<dbReference type="FunFam" id="1.20.5.700:FF:000001">
    <property type="entry name" value="Cytochrome f"/>
    <property type="match status" value="1"/>
</dbReference>
<dbReference type="FunFam" id="2.40.50.100:FF:000007">
    <property type="entry name" value="Cytochrome f"/>
    <property type="match status" value="1"/>
</dbReference>
<dbReference type="FunFam" id="2.60.40.830:FF:000001">
    <property type="entry name" value="Cytochrome f"/>
    <property type="match status" value="1"/>
</dbReference>
<dbReference type="Gene3D" id="2.40.50.100">
    <property type="match status" value="1"/>
</dbReference>
<dbReference type="Gene3D" id="2.60.40.830">
    <property type="entry name" value="Cytochrome f large domain"/>
    <property type="match status" value="1"/>
</dbReference>
<dbReference type="Gene3D" id="1.20.5.700">
    <property type="entry name" value="Single helix bin"/>
    <property type="match status" value="1"/>
</dbReference>
<dbReference type="HAMAP" id="MF_00610">
    <property type="entry name" value="Cytb6_f_cytF"/>
    <property type="match status" value="1"/>
</dbReference>
<dbReference type="InterPro" id="IPR024058">
    <property type="entry name" value="Cyt-f_TM"/>
</dbReference>
<dbReference type="InterPro" id="IPR002325">
    <property type="entry name" value="Cyt_f"/>
</dbReference>
<dbReference type="InterPro" id="IPR024094">
    <property type="entry name" value="Cyt_f_lg_dom"/>
</dbReference>
<dbReference type="InterPro" id="IPR036826">
    <property type="entry name" value="Cyt_f_lg_dom_sf"/>
</dbReference>
<dbReference type="InterPro" id="IPR011054">
    <property type="entry name" value="Rudment_hybrid_motif"/>
</dbReference>
<dbReference type="PANTHER" id="PTHR33288">
    <property type="match status" value="1"/>
</dbReference>
<dbReference type="PANTHER" id="PTHR33288:SF10">
    <property type="entry name" value="CYTOCHROME F"/>
    <property type="match status" value="1"/>
</dbReference>
<dbReference type="Pfam" id="PF01333">
    <property type="entry name" value="Apocytochr_F_C"/>
    <property type="match status" value="1"/>
</dbReference>
<dbReference type="Pfam" id="PF16639">
    <property type="entry name" value="Apocytochr_F_N"/>
    <property type="match status" value="1"/>
</dbReference>
<dbReference type="PRINTS" id="PR00610">
    <property type="entry name" value="CYTOCHROMEF"/>
</dbReference>
<dbReference type="SUPFAM" id="SSF103431">
    <property type="entry name" value="Cytochrome f subunit of the cytochrome b6f complex, transmembrane anchor"/>
    <property type="match status" value="1"/>
</dbReference>
<dbReference type="SUPFAM" id="SSF49441">
    <property type="entry name" value="Cytochrome f, large domain"/>
    <property type="match status" value="1"/>
</dbReference>
<dbReference type="SUPFAM" id="SSF51246">
    <property type="entry name" value="Rudiment single hybrid motif"/>
    <property type="match status" value="1"/>
</dbReference>
<dbReference type="PROSITE" id="PS51010">
    <property type="entry name" value="CYTF"/>
    <property type="match status" value="1"/>
</dbReference>
<keyword id="KW-0150">Chloroplast</keyword>
<keyword id="KW-0249">Electron transport</keyword>
<keyword id="KW-0349">Heme</keyword>
<keyword id="KW-0408">Iron</keyword>
<keyword id="KW-0472">Membrane</keyword>
<keyword id="KW-0479">Metal-binding</keyword>
<keyword id="KW-0602">Photosynthesis</keyword>
<keyword id="KW-0934">Plastid</keyword>
<keyword id="KW-0732">Signal</keyword>
<keyword id="KW-0793">Thylakoid</keyword>
<keyword id="KW-0812">Transmembrane</keyword>
<keyword id="KW-1133">Transmembrane helix</keyword>
<keyword id="KW-0813">Transport</keyword>